<proteinExistence type="predicted"/>
<organism>
    <name type="scientific">Xylella fastidiosa (strain 9a5c)</name>
    <dbReference type="NCBI Taxonomy" id="160492"/>
    <lineage>
        <taxon>Bacteria</taxon>
        <taxon>Pseudomonadati</taxon>
        <taxon>Pseudomonadota</taxon>
        <taxon>Gammaproteobacteria</taxon>
        <taxon>Lysobacterales</taxon>
        <taxon>Lysobacteraceae</taxon>
        <taxon>Xylella</taxon>
    </lineage>
</organism>
<protein>
    <recommendedName>
        <fullName>Uncharacterized protein XF_1567/XF_1672</fullName>
    </recommendedName>
</protein>
<reference key="1">
    <citation type="journal article" date="2000" name="Nature">
        <title>The genome sequence of the plant pathogen Xylella fastidiosa.</title>
        <authorList>
            <person name="Simpson A.J.G."/>
            <person name="Reinach F.C."/>
            <person name="Arruda P."/>
            <person name="Abreu F.A."/>
            <person name="Acencio M."/>
            <person name="Alvarenga R."/>
            <person name="Alves L.M.C."/>
            <person name="Araya J.E."/>
            <person name="Baia G.S."/>
            <person name="Baptista C.S."/>
            <person name="Barros M.H."/>
            <person name="Bonaccorsi E.D."/>
            <person name="Bordin S."/>
            <person name="Bove J.M."/>
            <person name="Briones M.R.S."/>
            <person name="Bueno M.R.P."/>
            <person name="Camargo A.A."/>
            <person name="Camargo L.E.A."/>
            <person name="Carraro D.M."/>
            <person name="Carrer H."/>
            <person name="Colauto N.B."/>
            <person name="Colombo C."/>
            <person name="Costa F.F."/>
            <person name="Costa M.C.R."/>
            <person name="Costa-Neto C.M."/>
            <person name="Coutinho L.L."/>
            <person name="Cristofani M."/>
            <person name="Dias-Neto E."/>
            <person name="Docena C."/>
            <person name="El-Dorry H."/>
            <person name="Facincani A.P."/>
            <person name="Ferreira A.J.S."/>
            <person name="Ferreira V.C.A."/>
            <person name="Ferro J.A."/>
            <person name="Fraga J.S."/>
            <person name="Franca S.C."/>
            <person name="Franco M.C."/>
            <person name="Frohme M."/>
            <person name="Furlan L.R."/>
            <person name="Garnier M."/>
            <person name="Goldman G.H."/>
            <person name="Goldman M.H.S."/>
            <person name="Gomes S.L."/>
            <person name="Gruber A."/>
            <person name="Ho P.L."/>
            <person name="Hoheisel J.D."/>
            <person name="Junqueira M.L."/>
            <person name="Kemper E.L."/>
            <person name="Kitajima J.P."/>
            <person name="Krieger J.E."/>
            <person name="Kuramae E.E."/>
            <person name="Laigret F."/>
            <person name="Lambais M.R."/>
            <person name="Leite L.C.C."/>
            <person name="Lemos E.G.M."/>
            <person name="Lemos M.V.F."/>
            <person name="Lopes S.A."/>
            <person name="Lopes C.R."/>
            <person name="Machado J.A."/>
            <person name="Machado M.A."/>
            <person name="Madeira A.M.B.N."/>
            <person name="Madeira H.M.F."/>
            <person name="Marino C.L."/>
            <person name="Marques M.V."/>
            <person name="Martins E.A.L."/>
            <person name="Martins E.M.F."/>
            <person name="Matsukuma A.Y."/>
            <person name="Menck C.F.M."/>
            <person name="Miracca E.C."/>
            <person name="Miyaki C.Y."/>
            <person name="Monteiro-Vitorello C.B."/>
            <person name="Moon D.H."/>
            <person name="Nagai M.A."/>
            <person name="Nascimento A.L.T.O."/>
            <person name="Netto L.E.S."/>
            <person name="Nhani A. Jr."/>
            <person name="Nobrega F.G."/>
            <person name="Nunes L.R."/>
            <person name="Oliveira M.A."/>
            <person name="de Oliveira M.C."/>
            <person name="de Oliveira R.C."/>
            <person name="Palmieri D.A."/>
            <person name="Paris A."/>
            <person name="Peixoto B.R."/>
            <person name="Pereira G.A.G."/>
            <person name="Pereira H.A. Jr."/>
            <person name="Pesquero J.B."/>
            <person name="Quaggio R.B."/>
            <person name="Roberto P.G."/>
            <person name="Rodrigues V."/>
            <person name="de Rosa A.J.M."/>
            <person name="de Rosa V.E. Jr."/>
            <person name="de Sa R.G."/>
            <person name="Santelli R.V."/>
            <person name="Sawasaki H.E."/>
            <person name="da Silva A.C.R."/>
            <person name="da Silva A.M."/>
            <person name="da Silva F.R."/>
            <person name="Silva W.A. Jr."/>
            <person name="da Silveira J.F."/>
            <person name="Silvestri M.L.Z."/>
            <person name="Siqueira W.J."/>
            <person name="de Souza A.A."/>
            <person name="de Souza A.P."/>
            <person name="Terenzi M.F."/>
            <person name="Truffi D."/>
            <person name="Tsai S.M."/>
            <person name="Tsuhako M.H."/>
            <person name="Vallada H."/>
            <person name="Van Sluys M.A."/>
            <person name="Verjovski-Almeida S."/>
            <person name="Vettore A.L."/>
            <person name="Zago M.A."/>
            <person name="Zatz M."/>
            <person name="Meidanis J."/>
            <person name="Setubal J.C."/>
        </authorList>
    </citation>
    <scope>NUCLEOTIDE SEQUENCE [LARGE SCALE GENOMIC DNA]</scope>
    <source>
        <strain>9a5c</strain>
    </source>
</reference>
<dbReference type="EMBL" id="AE003849">
    <property type="protein sequence ID" value="AAF84376.1"/>
    <property type="molecule type" value="Genomic_DNA"/>
</dbReference>
<dbReference type="EMBL" id="AE003849">
    <property type="protein sequence ID" value="AAF84481.1"/>
    <property type="molecule type" value="Genomic_DNA"/>
</dbReference>
<dbReference type="PIR" id="C82654">
    <property type="entry name" value="C82654"/>
</dbReference>
<dbReference type="STRING" id="160492.XF_1567"/>
<dbReference type="KEGG" id="xfa:XF_1567"/>
<dbReference type="KEGG" id="xfa:XF_1672"/>
<dbReference type="HOGENOM" id="CLU_2866858_0_0_6"/>
<dbReference type="Proteomes" id="UP000000812">
    <property type="component" value="Chromosome"/>
</dbReference>
<dbReference type="Pfam" id="PF23793">
    <property type="entry name" value="LysC"/>
    <property type="match status" value="1"/>
</dbReference>
<sequence length="77" mass="8429">MRQTRVEVILPPQGVLQPCEAPELGRVDTVRDLLNQTLGWRFAYEQCAAQVRCVAAWAQAASVGQPWSADGCGEEAE</sequence>
<accession>Q9P9T3</accession>
<feature type="chain" id="PRO_0000220275" description="Uncharacterized protein XF_1567/XF_1672">
    <location>
        <begin position="1"/>
        <end position="77"/>
    </location>
</feature>
<gene>
    <name type="ordered locus">XF_1567</name>
</gene>
<gene>
    <name type="ordered locus">XF_1672</name>
</gene>
<name>Y1567_XYLFA</name>